<sequence length="151" mass="15812">MNSIKVKIAYVRKDKAPKLPQYATPGAAGVDLQASLDQELTIEPGQIVKIPTGLAIELPHAGVGAFVFARSGLASKYGLALANGVGVIDSDYRGEILVAVINQGSEPFVVKDGDRIAQMVFLPVFIGEFYLADQLDETGRGCGGFGSTGVS</sequence>
<gene>
    <name evidence="1" type="primary">dut</name>
    <name type="ordered locus">DSY2505</name>
</gene>
<protein>
    <recommendedName>
        <fullName evidence="1">Deoxyuridine 5'-triphosphate nucleotidohydrolase</fullName>
        <shortName evidence="1">dUTPase</shortName>
        <ecNumber evidence="1">3.6.1.23</ecNumber>
    </recommendedName>
    <alternativeName>
        <fullName evidence="1">dUTP pyrophosphatase</fullName>
    </alternativeName>
</protein>
<dbReference type="EC" id="3.6.1.23" evidence="1"/>
<dbReference type="EMBL" id="AP008230">
    <property type="protein sequence ID" value="BAE84294.1"/>
    <property type="molecule type" value="Genomic_DNA"/>
</dbReference>
<dbReference type="RefSeq" id="WP_005808844.1">
    <property type="nucleotide sequence ID" value="NC_007907.1"/>
</dbReference>
<dbReference type="SMR" id="Q24UJ8"/>
<dbReference type="STRING" id="138119.DSY2505"/>
<dbReference type="KEGG" id="dsy:DSY2505"/>
<dbReference type="eggNOG" id="COG0756">
    <property type="taxonomic scope" value="Bacteria"/>
</dbReference>
<dbReference type="HOGENOM" id="CLU_068508_1_1_9"/>
<dbReference type="UniPathway" id="UPA00610">
    <property type="reaction ID" value="UER00666"/>
</dbReference>
<dbReference type="Proteomes" id="UP000001946">
    <property type="component" value="Chromosome"/>
</dbReference>
<dbReference type="GO" id="GO:0004170">
    <property type="term" value="F:dUTP diphosphatase activity"/>
    <property type="evidence" value="ECO:0007669"/>
    <property type="project" value="UniProtKB-UniRule"/>
</dbReference>
<dbReference type="GO" id="GO:0000287">
    <property type="term" value="F:magnesium ion binding"/>
    <property type="evidence" value="ECO:0007669"/>
    <property type="project" value="UniProtKB-UniRule"/>
</dbReference>
<dbReference type="GO" id="GO:0006226">
    <property type="term" value="P:dUMP biosynthetic process"/>
    <property type="evidence" value="ECO:0007669"/>
    <property type="project" value="UniProtKB-UniRule"/>
</dbReference>
<dbReference type="GO" id="GO:0046081">
    <property type="term" value="P:dUTP catabolic process"/>
    <property type="evidence" value="ECO:0007669"/>
    <property type="project" value="InterPro"/>
</dbReference>
<dbReference type="CDD" id="cd07557">
    <property type="entry name" value="trimeric_dUTPase"/>
    <property type="match status" value="1"/>
</dbReference>
<dbReference type="FunFam" id="2.70.40.10:FF:000002">
    <property type="entry name" value="dUTP diphosphatase"/>
    <property type="match status" value="1"/>
</dbReference>
<dbReference type="Gene3D" id="2.70.40.10">
    <property type="match status" value="1"/>
</dbReference>
<dbReference type="HAMAP" id="MF_00116">
    <property type="entry name" value="dUTPase_bact"/>
    <property type="match status" value="1"/>
</dbReference>
<dbReference type="InterPro" id="IPR008181">
    <property type="entry name" value="dUTPase"/>
</dbReference>
<dbReference type="InterPro" id="IPR029054">
    <property type="entry name" value="dUTPase-like"/>
</dbReference>
<dbReference type="InterPro" id="IPR036157">
    <property type="entry name" value="dUTPase-like_sf"/>
</dbReference>
<dbReference type="InterPro" id="IPR033704">
    <property type="entry name" value="dUTPase_trimeric"/>
</dbReference>
<dbReference type="NCBIfam" id="TIGR00576">
    <property type="entry name" value="dut"/>
    <property type="match status" value="1"/>
</dbReference>
<dbReference type="NCBIfam" id="NF001862">
    <property type="entry name" value="PRK00601.1"/>
    <property type="match status" value="1"/>
</dbReference>
<dbReference type="PANTHER" id="PTHR11241">
    <property type="entry name" value="DEOXYURIDINE 5'-TRIPHOSPHATE NUCLEOTIDOHYDROLASE"/>
    <property type="match status" value="1"/>
</dbReference>
<dbReference type="PANTHER" id="PTHR11241:SF0">
    <property type="entry name" value="DEOXYURIDINE 5'-TRIPHOSPHATE NUCLEOTIDOHYDROLASE"/>
    <property type="match status" value="1"/>
</dbReference>
<dbReference type="Pfam" id="PF00692">
    <property type="entry name" value="dUTPase"/>
    <property type="match status" value="1"/>
</dbReference>
<dbReference type="SUPFAM" id="SSF51283">
    <property type="entry name" value="dUTPase-like"/>
    <property type="match status" value="1"/>
</dbReference>
<proteinExistence type="inferred from homology"/>
<keyword id="KW-0378">Hydrolase</keyword>
<keyword id="KW-0460">Magnesium</keyword>
<keyword id="KW-0479">Metal-binding</keyword>
<keyword id="KW-0546">Nucleotide metabolism</keyword>
<keyword id="KW-1185">Reference proteome</keyword>
<reference key="1">
    <citation type="journal article" date="2006" name="J. Bacteriol.">
        <title>Complete genome sequence of the dehalorespiring bacterium Desulfitobacterium hafniense Y51 and comparison with Dehalococcoides ethenogenes 195.</title>
        <authorList>
            <person name="Nonaka H."/>
            <person name="Keresztes G."/>
            <person name="Shinoda Y."/>
            <person name="Ikenaga Y."/>
            <person name="Abe M."/>
            <person name="Naito K."/>
            <person name="Inatomi K."/>
            <person name="Furukawa K."/>
            <person name="Inui M."/>
            <person name="Yukawa H."/>
        </authorList>
    </citation>
    <scope>NUCLEOTIDE SEQUENCE [LARGE SCALE GENOMIC DNA]</scope>
    <source>
        <strain>Y51</strain>
    </source>
</reference>
<feature type="chain" id="PRO_1000015465" description="Deoxyuridine 5'-triphosphate nucleotidohydrolase">
    <location>
        <begin position="1"/>
        <end position="151"/>
    </location>
</feature>
<feature type="binding site" evidence="1">
    <location>
        <begin position="70"/>
        <end position="72"/>
    </location>
    <ligand>
        <name>substrate</name>
    </ligand>
</feature>
<feature type="binding site" evidence="1">
    <location>
        <position position="83"/>
    </location>
    <ligand>
        <name>substrate</name>
    </ligand>
</feature>
<feature type="binding site" evidence="1">
    <location>
        <begin position="87"/>
        <end position="89"/>
    </location>
    <ligand>
        <name>substrate</name>
    </ligand>
</feature>
<comment type="function">
    <text evidence="1">This enzyme is involved in nucleotide metabolism: it produces dUMP, the immediate precursor of thymidine nucleotides and it decreases the intracellular concentration of dUTP so that uracil cannot be incorporated into DNA.</text>
</comment>
<comment type="catalytic activity">
    <reaction evidence="1">
        <text>dUTP + H2O = dUMP + diphosphate + H(+)</text>
        <dbReference type="Rhea" id="RHEA:10248"/>
        <dbReference type="ChEBI" id="CHEBI:15377"/>
        <dbReference type="ChEBI" id="CHEBI:15378"/>
        <dbReference type="ChEBI" id="CHEBI:33019"/>
        <dbReference type="ChEBI" id="CHEBI:61555"/>
        <dbReference type="ChEBI" id="CHEBI:246422"/>
        <dbReference type="EC" id="3.6.1.23"/>
    </reaction>
</comment>
<comment type="cofactor">
    <cofactor evidence="1">
        <name>Mg(2+)</name>
        <dbReference type="ChEBI" id="CHEBI:18420"/>
    </cofactor>
</comment>
<comment type="pathway">
    <text evidence="1">Pyrimidine metabolism; dUMP biosynthesis; dUMP from dCTP (dUTP route): step 2/2.</text>
</comment>
<comment type="similarity">
    <text evidence="1">Belongs to the dUTPase family.</text>
</comment>
<organism>
    <name type="scientific">Desulfitobacterium hafniense (strain Y51)</name>
    <dbReference type="NCBI Taxonomy" id="138119"/>
    <lineage>
        <taxon>Bacteria</taxon>
        <taxon>Bacillati</taxon>
        <taxon>Bacillota</taxon>
        <taxon>Clostridia</taxon>
        <taxon>Eubacteriales</taxon>
        <taxon>Desulfitobacteriaceae</taxon>
        <taxon>Desulfitobacterium</taxon>
    </lineage>
</organism>
<accession>Q24UJ8</accession>
<name>DUT_DESHY</name>
<evidence type="ECO:0000255" key="1">
    <source>
        <dbReference type="HAMAP-Rule" id="MF_00116"/>
    </source>
</evidence>